<proteinExistence type="inferred from homology"/>
<dbReference type="EMBL" id="EF614270">
    <property type="protein sequence ID" value="ABQ81487.1"/>
    <property type="molecule type" value="Genomic_DNA"/>
</dbReference>
<dbReference type="RefSeq" id="YP_001542483.1">
    <property type="nucleotide sequence ID" value="NC_009962.1"/>
</dbReference>
<dbReference type="SMR" id="A8SED9"/>
<dbReference type="GeneID" id="5729368"/>
<dbReference type="GO" id="GO:0009507">
    <property type="term" value="C:chloroplast"/>
    <property type="evidence" value="ECO:0007669"/>
    <property type="project" value="UniProtKB-SubCell"/>
</dbReference>
<dbReference type="GO" id="GO:1990904">
    <property type="term" value="C:ribonucleoprotein complex"/>
    <property type="evidence" value="ECO:0007669"/>
    <property type="project" value="UniProtKB-KW"/>
</dbReference>
<dbReference type="GO" id="GO:0005840">
    <property type="term" value="C:ribosome"/>
    <property type="evidence" value="ECO:0007669"/>
    <property type="project" value="UniProtKB-KW"/>
</dbReference>
<dbReference type="GO" id="GO:0019843">
    <property type="term" value="F:rRNA binding"/>
    <property type="evidence" value="ECO:0007669"/>
    <property type="project" value="UniProtKB-UniRule"/>
</dbReference>
<dbReference type="GO" id="GO:0003735">
    <property type="term" value="F:structural constituent of ribosome"/>
    <property type="evidence" value="ECO:0007669"/>
    <property type="project" value="InterPro"/>
</dbReference>
<dbReference type="GO" id="GO:0006412">
    <property type="term" value="P:translation"/>
    <property type="evidence" value="ECO:0007669"/>
    <property type="project" value="UniProtKB-UniRule"/>
</dbReference>
<dbReference type="FunFam" id="3.30.1490.10:FF:000001">
    <property type="entry name" value="30S ribosomal protein S8"/>
    <property type="match status" value="1"/>
</dbReference>
<dbReference type="FunFam" id="3.30.1370.30:FF:000004">
    <property type="entry name" value="30S ribosomal protein S8, chloroplastic"/>
    <property type="match status" value="1"/>
</dbReference>
<dbReference type="Gene3D" id="3.30.1370.30">
    <property type="match status" value="1"/>
</dbReference>
<dbReference type="Gene3D" id="3.30.1490.10">
    <property type="match status" value="1"/>
</dbReference>
<dbReference type="HAMAP" id="MF_01302_B">
    <property type="entry name" value="Ribosomal_uS8_B"/>
    <property type="match status" value="1"/>
</dbReference>
<dbReference type="InterPro" id="IPR000630">
    <property type="entry name" value="Ribosomal_uS8"/>
</dbReference>
<dbReference type="InterPro" id="IPR047863">
    <property type="entry name" value="Ribosomal_uS8_CS"/>
</dbReference>
<dbReference type="InterPro" id="IPR035987">
    <property type="entry name" value="Ribosomal_uS8_sf"/>
</dbReference>
<dbReference type="NCBIfam" id="NF001109">
    <property type="entry name" value="PRK00136.1"/>
    <property type="match status" value="1"/>
</dbReference>
<dbReference type="PANTHER" id="PTHR11758">
    <property type="entry name" value="40S RIBOSOMAL PROTEIN S15A"/>
    <property type="match status" value="1"/>
</dbReference>
<dbReference type="Pfam" id="PF00410">
    <property type="entry name" value="Ribosomal_S8"/>
    <property type="match status" value="1"/>
</dbReference>
<dbReference type="SUPFAM" id="SSF56047">
    <property type="entry name" value="Ribosomal protein S8"/>
    <property type="match status" value="1"/>
</dbReference>
<dbReference type="PROSITE" id="PS00053">
    <property type="entry name" value="RIBOSOMAL_S8"/>
    <property type="match status" value="1"/>
</dbReference>
<name>RR8_CERDE</name>
<feature type="chain" id="PRO_0000322025" description="Small ribosomal subunit protein uS8c">
    <location>
        <begin position="1"/>
        <end position="132"/>
    </location>
</feature>
<organism>
    <name type="scientific">Ceratophyllum demersum</name>
    <name type="common">Rigid hornwort</name>
    <name type="synonym">Coontail</name>
    <dbReference type="NCBI Taxonomy" id="4428"/>
    <lineage>
        <taxon>Eukaryota</taxon>
        <taxon>Viridiplantae</taxon>
        <taxon>Streptophyta</taxon>
        <taxon>Embryophyta</taxon>
        <taxon>Tracheophyta</taxon>
        <taxon>Spermatophyta</taxon>
        <taxon>Magnoliopsida</taxon>
        <taxon>Ceratophyllales</taxon>
        <taxon>Ceratophyllaceae</taxon>
        <taxon>Ceratophyllum</taxon>
    </lineage>
</organism>
<accession>A8SED9</accession>
<geneLocation type="chloroplast"/>
<reference key="1">
    <citation type="journal article" date="2007" name="Proc. Natl. Acad. Sci. U.S.A.">
        <title>Using plastid genome-scale data to resolve enigmatic relationships among basal angiosperms.</title>
        <authorList>
            <person name="Moore M.J."/>
            <person name="Bell C.D."/>
            <person name="Soltis P.S."/>
            <person name="Soltis D.E."/>
        </authorList>
    </citation>
    <scope>NUCLEOTIDE SEQUENCE [LARGE SCALE GENOMIC DNA]</scope>
</reference>
<evidence type="ECO:0000250" key="1"/>
<evidence type="ECO:0000305" key="2"/>
<gene>
    <name type="primary">rps8</name>
</gene>
<protein>
    <recommendedName>
        <fullName evidence="2">Small ribosomal subunit protein uS8c</fullName>
    </recommendedName>
    <alternativeName>
        <fullName>30S ribosomal protein S8, chloroplastic</fullName>
    </alternativeName>
</protein>
<sequence>MGRDTISNILTSIRNADMNKKETVRIPSTNIIESIVRILLREGFIENVRKHQENNKNFLVSTLRHRRNRTGTYRNILKRISRPGLRIYSNSQRIPRILGGMGIVILSTSRGIMTDREARLEGIGGEILCSIW</sequence>
<comment type="function">
    <text evidence="1">One of the primary rRNA binding proteins, it binds directly to 16S rRNA central domain where it helps coordinate assembly of the platform of the 30S subunit.</text>
</comment>
<comment type="subunit">
    <text evidence="1">Part of the 30S ribosomal subunit.</text>
</comment>
<comment type="subcellular location">
    <subcellularLocation>
        <location>Plastid</location>
        <location>Chloroplast</location>
    </subcellularLocation>
</comment>
<comment type="similarity">
    <text evidence="2">Belongs to the universal ribosomal protein uS8 family.</text>
</comment>
<keyword id="KW-0150">Chloroplast</keyword>
<keyword id="KW-0934">Plastid</keyword>
<keyword id="KW-0687">Ribonucleoprotein</keyword>
<keyword id="KW-0689">Ribosomal protein</keyword>
<keyword id="KW-0694">RNA-binding</keyword>
<keyword id="KW-0699">rRNA-binding</keyword>